<name>GLDSA_STRRI</name>
<dbReference type="EC" id="2.6.1.100" evidence="2"/>
<dbReference type="EC" id="2.6.1.101" evidence="2"/>
<dbReference type="EMBL" id="AJ748131">
    <property type="protein sequence ID" value="CAG34719.1"/>
    <property type="molecule type" value="Genomic_DNA"/>
</dbReference>
<dbReference type="EMBL" id="AJ744850">
    <property type="protein sequence ID" value="CAG34038.1"/>
    <property type="molecule type" value="Genomic_DNA"/>
</dbReference>
<dbReference type="EMBL" id="AB066371">
    <property type="protein sequence ID" value="BAD30058.1"/>
    <property type="molecule type" value="Genomic_DNA"/>
</dbReference>
<dbReference type="PDB" id="5W70">
    <property type="method" value="X-ray"/>
    <property type="resolution" value="2.10 A"/>
    <property type="chains" value="A/B=1-424"/>
</dbReference>
<dbReference type="PDBsum" id="5W70"/>
<dbReference type="SMR" id="Q4R0W2"/>
<dbReference type="BRENDA" id="2.6.1.100">
    <property type="organism ID" value="6083"/>
</dbReference>
<dbReference type="BRENDA" id="2.6.1.50">
    <property type="organism ID" value="6083"/>
</dbReference>
<dbReference type="UniPathway" id="UPA00907">
    <property type="reaction ID" value="UER00922"/>
</dbReference>
<dbReference type="UniPathway" id="UPA00907">
    <property type="reaction ID" value="UER00924"/>
</dbReference>
<dbReference type="UniPathway" id="UPA00972"/>
<dbReference type="GO" id="GO:0030170">
    <property type="term" value="F:pyridoxal phosphate binding"/>
    <property type="evidence" value="ECO:0007669"/>
    <property type="project" value="TreeGrafter"/>
</dbReference>
<dbReference type="GO" id="GO:0008483">
    <property type="term" value="F:transaminase activity"/>
    <property type="evidence" value="ECO:0007669"/>
    <property type="project" value="UniProtKB-KW"/>
</dbReference>
<dbReference type="GO" id="GO:0017000">
    <property type="term" value="P:antibiotic biosynthetic process"/>
    <property type="evidence" value="ECO:0007669"/>
    <property type="project" value="UniProtKB-KW"/>
</dbReference>
<dbReference type="GO" id="GO:0000271">
    <property type="term" value="P:polysaccharide biosynthetic process"/>
    <property type="evidence" value="ECO:0007669"/>
    <property type="project" value="TreeGrafter"/>
</dbReference>
<dbReference type="CDD" id="cd00616">
    <property type="entry name" value="AHBA_syn"/>
    <property type="match status" value="1"/>
</dbReference>
<dbReference type="Gene3D" id="3.90.1150.10">
    <property type="entry name" value="Aspartate Aminotransferase, domain 1"/>
    <property type="match status" value="1"/>
</dbReference>
<dbReference type="Gene3D" id="3.40.640.10">
    <property type="entry name" value="Type I PLP-dependent aspartate aminotransferase-like (Major domain)"/>
    <property type="match status" value="1"/>
</dbReference>
<dbReference type="InterPro" id="IPR000653">
    <property type="entry name" value="DegT/StrS_aminotransferase"/>
</dbReference>
<dbReference type="InterPro" id="IPR015424">
    <property type="entry name" value="PyrdxlP-dep_Trfase"/>
</dbReference>
<dbReference type="InterPro" id="IPR015421">
    <property type="entry name" value="PyrdxlP-dep_Trfase_major"/>
</dbReference>
<dbReference type="InterPro" id="IPR015422">
    <property type="entry name" value="PyrdxlP-dep_Trfase_small"/>
</dbReference>
<dbReference type="PANTHER" id="PTHR30244:SF34">
    <property type="entry name" value="DTDP-4-AMINO-4,6-DIDEOXYGALACTOSE TRANSAMINASE"/>
    <property type="match status" value="1"/>
</dbReference>
<dbReference type="PANTHER" id="PTHR30244">
    <property type="entry name" value="TRANSAMINASE"/>
    <property type="match status" value="1"/>
</dbReference>
<dbReference type="Pfam" id="PF01041">
    <property type="entry name" value="DegT_DnrJ_EryC1"/>
    <property type="match status" value="1"/>
</dbReference>
<dbReference type="PIRSF" id="PIRSF000390">
    <property type="entry name" value="PLP_StrS"/>
    <property type="match status" value="1"/>
</dbReference>
<dbReference type="SUPFAM" id="SSF53383">
    <property type="entry name" value="PLP-dependent transferases"/>
    <property type="match status" value="1"/>
</dbReference>
<evidence type="ECO:0000250" key="1"/>
<evidence type="ECO:0000250" key="2">
    <source>
        <dbReference type="UniProtKB" id="Q6L739"/>
    </source>
</evidence>
<evidence type="ECO:0000305" key="3"/>
<evidence type="ECO:0007829" key="4">
    <source>
        <dbReference type="PDB" id="5W70"/>
    </source>
</evidence>
<gene>
    <name type="primary">rbmB</name>
    <name type="synonym">rbcS</name>
    <name type="synonym">ribS</name>
</gene>
<keyword id="KW-0002">3D-structure</keyword>
<keyword id="KW-0032">Aminotransferase</keyword>
<keyword id="KW-0045">Antibiotic biosynthesis</keyword>
<keyword id="KW-0663">Pyridoxal phosphate</keyword>
<keyword id="KW-0808">Transferase</keyword>
<proteinExistence type="evidence at protein level"/>
<accession>Q4R0W2</accession>
<accession>Q6F6I0</accession>
<sequence length="424" mass="45012">MVSQLAVKGGEALRTRPWPAWPQPAPGVPDAVADVLGSGRWSISGPYRGTESYERRFARAFAAYNGVPHCVPAASGTASLMLALEACGIGAGDEVIVPGLSWVASGSTILGVNAVPIFCDVDPDTLCLSPEAVEAAITEHTRAIVVVHLYSALADMDALSAIAERHGLPLIEDCAQAHGATYRGVKVGALATAGTFSMQHSKVLTSGEGGAVITRDEDFARRVEHLRADGRCLSAVPPAPGAMELVETGELMGNNRCLSEFQAAILAEQLTILDEQNETRRANAAHLDGLLGELGLRPQTTSDGTTSRTYYTYAVRLPDGVLEDVPVTDVSCALTAELGFPVLPSYAPIPANRLYTPHTRRRYTLGLDHERRIDPKRFALPVCEDAARRTVTLHHAALLGDADDMGDIAAAFAKVLRHGAGLMH</sequence>
<comment type="function">
    <text evidence="2">Catalyzes the PLP-dependent transamination of 2-deoxy-scyllo-inosose (2-DOI) to form 2-deoxy-scyllo-inosamine (2-DOIA) using L-glutamine as the amino donor. Also catalyzes the transamination of 3-amino-2,3-dideoxy-scyllo-inosose (keto-2-DOIA) into 2-deoxystreptamine (2-DOS).</text>
</comment>
<comment type="catalytic activity">
    <reaction evidence="2">
        <text>2-deoxy-L-scyllo-inosose + L-glutamine = 2-deoxy-scyllo-inosamine + 2-oxoglutaramate</text>
        <dbReference type="Rhea" id="RHEA:34147"/>
        <dbReference type="ChEBI" id="CHEBI:16769"/>
        <dbReference type="ChEBI" id="CHEBI:58359"/>
        <dbReference type="ChEBI" id="CHEBI:64796"/>
        <dbReference type="ChEBI" id="CHEBI:65003"/>
        <dbReference type="EC" id="2.6.1.100"/>
    </reaction>
</comment>
<comment type="catalytic activity">
    <reaction evidence="2">
        <text>3-amino-2,3-dideoxy-scyllo-inosose + L-glutamine = 2-deoxystreptamine + 2-oxoglutaramate</text>
        <dbReference type="Rhea" id="RHEA:34151"/>
        <dbReference type="ChEBI" id="CHEBI:16769"/>
        <dbReference type="ChEBI" id="CHEBI:58359"/>
        <dbReference type="ChEBI" id="CHEBI:65002"/>
        <dbReference type="ChEBI" id="CHEBI:65069"/>
        <dbReference type="EC" id="2.6.1.101"/>
    </reaction>
</comment>
<comment type="cofactor">
    <cofactor evidence="1">
        <name>pyridoxal 5'-phosphate</name>
        <dbReference type="ChEBI" id="CHEBI:597326"/>
    </cofactor>
</comment>
<comment type="pathway">
    <text>Metabolic intermediate biosynthesis; 2-deoxystreptamine biosynthesis; 2-deoxystreptamine from D-glucose 6-phosphate: step 2/4.</text>
</comment>
<comment type="pathway">
    <text>Metabolic intermediate biosynthesis; 2-deoxystreptamine biosynthesis; 2-deoxystreptamine from D-glucose 6-phosphate: step 4/4.</text>
</comment>
<comment type="pathway">
    <text>Antibiotic biosynthesis; ribostamycin biosynthesis.</text>
</comment>
<comment type="similarity">
    <text evidence="3">Belongs to the DegT/DnrJ/EryC1 family. L-glutamine:2-deoxy-scyllo-inosose/scyllo-inosose aminotransferase subfamily.</text>
</comment>
<organism>
    <name type="scientific">Streptomyces ribosidificus</name>
    <dbReference type="NCBI Taxonomy" id="80859"/>
    <lineage>
        <taxon>Bacteria</taxon>
        <taxon>Bacillati</taxon>
        <taxon>Actinomycetota</taxon>
        <taxon>Actinomycetes</taxon>
        <taxon>Kitasatosporales</taxon>
        <taxon>Streptomycetaceae</taxon>
        <taxon>Streptomyces</taxon>
    </lineage>
</organism>
<reference key="1">
    <citation type="journal article" date="2005" name="Mol. Cells">
        <title>The ribostamycin biosynthetic gene cluster in Streptomyces ribosidificus: comparison with butirosin biosynthesis.</title>
        <authorList>
            <person name="Subba B."/>
            <person name="Kharel M.K."/>
            <person name="Lee H.C."/>
            <person name="Liou K."/>
            <person name="Kim B.-G."/>
            <person name="Sohng J.K."/>
        </authorList>
    </citation>
    <scope>NUCLEOTIDE SEQUENCE [GENOMIC DNA]</scope>
    <source>
        <strain>ATCC 21294 / JCM 4923 / NBRC 13796 / NRRL B-11466</strain>
    </source>
</reference>
<reference key="2">
    <citation type="submission" date="2004-06" db="EMBL/GenBank/DDBJ databases">
        <title>Analysis and comparison of biosynthetic gene clusters for the 2-deoxy-inosamine containing aminoglycoside antibiotics ribostamycin, neomycin, lividomycin, paromomycin and butirosin.</title>
        <authorList>
            <person name="Aboshanab K.M.A."/>
            <person name="Schmidt-Beissner H."/>
            <person name="Wehmeier U.F."/>
            <person name="Piepersberg W."/>
            <person name="Welzel K."/>
            <person name="Vente A."/>
        </authorList>
    </citation>
    <scope>NUCLEOTIDE SEQUENCE [GENOMIC DNA]</scope>
    <source>
        <strain>ATCC 21294 / JCM 4923 / NBRC 13796 / NRRL B-11466</strain>
    </source>
</reference>
<reference key="3">
    <citation type="journal article" date="2002" name="J. Antibiot.">
        <title>First identification of Streptomyces genes involved in the biosynthesis of 2-deoxystreptamine-containing aminoglycoside antibiotics. Genetic and evolutionary analysis of L-glutamine:2-deoxy-scyllo-inosose aminotransferase genes.</title>
        <authorList>
            <person name="Tamegai H."/>
            <person name="Eguchi T."/>
            <person name="Kakinuma K."/>
        </authorList>
    </citation>
    <scope>NUCLEOTIDE SEQUENCE [GENOMIC DNA] OF 101-257</scope>
    <source>
        <strain>ATCC 21294 / JCM 4923 / NBRC 13796 / NRRL B-11466</strain>
    </source>
</reference>
<feature type="chain" id="PRO_0000233021" description="L-glutamine:2-deoxy-scyllo-inosose aminotransferase">
    <location>
        <begin position="1"/>
        <end position="424"/>
    </location>
</feature>
<feature type="modified residue" description="N6-(pyridoxal phosphate)lysine" evidence="1">
    <location>
        <position position="202"/>
    </location>
</feature>
<feature type="sequence conflict" description="In Ref. 3; BAD30058." evidence="3" ref="3">
    <original>A</original>
    <variation>V</variation>
    <location>
        <position position="228"/>
    </location>
</feature>
<feature type="helix" evidence="4">
    <location>
        <begin position="6"/>
        <end position="8"/>
    </location>
</feature>
<feature type="helix" evidence="4">
    <location>
        <begin position="28"/>
        <end position="37"/>
    </location>
</feature>
<feature type="helix" evidence="4">
    <location>
        <begin position="53"/>
        <end position="65"/>
    </location>
</feature>
<feature type="strand" evidence="4">
    <location>
        <begin position="68"/>
        <end position="74"/>
    </location>
</feature>
<feature type="helix" evidence="4">
    <location>
        <begin position="76"/>
        <end position="86"/>
    </location>
</feature>
<feature type="strand" evidence="4">
    <location>
        <begin position="94"/>
        <end position="101"/>
    </location>
</feature>
<feature type="helix" evidence="4">
    <location>
        <begin position="104"/>
        <end position="111"/>
    </location>
</feature>
<feature type="strand" evidence="4">
    <location>
        <begin position="115"/>
        <end position="119"/>
    </location>
</feature>
<feature type="turn" evidence="4">
    <location>
        <begin position="123"/>
        <end position="125"/>
    </location>
</feature>
<feature type="helix" evidence="4">
    <location>
        <begin position="130"/>
        <end position="136"/>
    </location>
</feature>
<feature type="strand" evidence="4">
    <location>
        <begin position="141"/>
        <end position="147"/>
    </location>
</feature>
<feature type="helix" evidence="4">
    <location>
        <begin position="156"/>
        <end position="166"/>
    </location>
</feature>
<feature type="strand" evidence="4">
    <location>
        <begin position="170"/>
        <end position="173"/>
    </location>
</feature>
<feature type="turn" evidence="4">
    <location>
        <begin position="175"/>
        <end position="179"/>
    </location>
</feature>
<feature type="strand" evidence="4">
    <location>
        <begin position="189"/>
        <end position="197"/>
    </location>
</feature>
<feature type="strand" evidence="4">
    <location>
        <begin position="202"/>
        <end position="204"/>
    </location>
</feature>
<feature type="strand" evidence="4">
    <location>
        <begin position="206"/>
        <end position="208"/>
    </location>
</feature>
<feature type="strand" evidence="4">
    <location>
        <begin position="210"/>
        <end position="215"/>
    </location>
</feature>
<feature type="helix" evidence="4">
    <location>
        <begin position="217"/>
        <end position="227"/>
    </location>
</feature>
<feature type="strand" evidence="4">
    <location>
        <begin position="244"/>
        <end position="246"/>
    </location>
</feature>
<feature type="helix" evidence="4">
    <location>
        <begin position="260"/>
        <end position="270"/>
    </location>
</feature>
<feature type="helix" evidence="4">
    <location>
        <begin position="273"/>
        <end position="293"/>
    </location>
</feature>
<feature type="strand" evidence="4">
    <location>
        <begin position="305"/>
        <end position="307"/>
    </location>
</feature>
<feature type="strand" evidence="4">
    <location>
        <begin position="311"/>
        <end position="316"/>
    </location>
</feature>
<feature type="helix" evidence="4">
    <location>
        <begin position="327"/>
        <end position="338"/>
    </location>
</feature>
<feature type="helix" evidence="4">
    <location>
        <begin position="349"/>
        <end position="351"/>
    </location>
</feature>
<feature type="helix" evidence="4">
    <location>
        <begin position="357"/>
        <end position="359"/>
    </location>
</feature>
<feature type="helix" evidence="4">
    <location>
        <begin position="361"/>
        <end position="363"/>
    </location>
</feature>
<feature type="helix" evidence="4">
    <location>
        <begin position="367"/>
        <end position="373"/>
    </location>
</feature>
<feature type="helix" evidence="4">
    <location>
        <begin position="375"/>
        <end position="377"/>
    </location>
</feature>
<feature type="helix" evidence="4">
    <location>
        <begin position="381"/>
        <end position="389"/>
    </location>
</feature>
<feature type="strand" evidence="4">
    <location>
        <begin position="390"/>
        <end position="394"/>
    </location>
</feature>
<feature type="helix" evidence="4">
    <location>
        <begin position="395"/>
        <end position="398"/>
    </location>
</feature>
<feature type="helix" evidence="4">
    <location>
        <begin position="402"/>
        <end position="416"/>
    </location>
</feature>
<protein>
    <recommendedName>
        <fullName>L-glutamine:2-deoxy-scyllo-inosose aminotransferase</fullName>
        <shortName>L-glutamine:DOI aminotransferase</shortName>
        <ecNumber evidence="2">2.6.1.100</ecNumber>
    </recommendedName>
    <alternativeName>
        <fullName>L-glutamine:3-amino-2,3-dideoxy-scyllo-inosose aminotransferase</fullName>
        <shortName>L-glutamine:amino-DOI aminotransferase</shortName>
        <ecNumber evidence="2">2.6.1.101</ecNumber>
    </alternativeName>
</protein>